<gene>
    <name type="primary">hlyB</name>
</gene>
<feature type="chain" id="PRO_0000092376" description="Alpha-hemolysin translocation ATP-binding protein HlyB">
    <location>
        <begin position="1"/>
        <end position="707"/>
    </location>
</feature>
<feature type="transmembrane region" description="Helical" evidence="3">
    <location>
        <begin position="158"/>
        <end position="178"/>
    </location>
</feature>
<feature type="transmembrane region" description="Helical" evidence="3">
    <location>
        <begin position="191"/>
        <end position="211"/>
    </location>
</feature>
<feature type="transmembrane region" description="Helical" evidence="3">
    <location>
        <begin position="269"/>
        <end position="289"/>
    </location>
</feature>
<feature type="transmembrane region" description="Helical" evidence="3">
    <location>
        <begin position="295"/>
        <end position="315"/>
    </location>
</feature>
<feature type="transmembrane region" description="Helical" evidence="3">
    <location>
        <begin position="387"/>
        <end position="407"/>
    </location>
</feature>
<feature type="domain" description="Peptidase C39" evidence="1">
    <location>
        <begin position="2"/>
        <end position="125"/>
    </location>
</feature>
<feature type="domain" description="ABC transmembrane type-1" evidence="3">
    <location>
        <begin position="154"/>
        <end position="436"/>
    </location>
</feature>
<feature type="domain" description="ABC transporter" evidence="1 2">
    <location>
        <begin position="468"/>
        <end position="703"/>
    </location>
</feature>
<feature type="active site" evidence="1">
    <location>
        <position position="83"/>
    </location>
</feature>
<feature type="binding site" evidence="1 2">
    <location>
        <begin position="502"/>
        <end position="509"/>
    </location>
    <ligand>
        <name>ATP</name>
        <dbReference type="ChEBI" id="CHEBI:30616"/>
    </ligand>
</feature>
<evidence type="ECO:0000255" key="1">
    <source>
        <dbReference type="PROSITE-ProRule" id="PRU00362"/>
    </source>
</evidence>
<evidence type="ECO:0000255" key="2">
    <source>
        <dbReference type="PROSITE-ProRule" id="PRU00434"/>
    </source>
</evidence>
<evidence type="ECO:0000255" key="3">
    <source>
        <dbReference type="PROSITE-ProRule" id="PRU00441"/>
    </source>
</evidence>
<evidence type="ECO:0000305" key="4"/>
<dbReference type="EMBL" id="X12852">
    <property type="protein sequence ID" value="CAA31330.1"/>
    <property type="molecule type" value="Genomic_DNA"/>
</dbReference>
<dbReference type="PIR" id="S05477">
    <property type="entry name" value="LEEBBV"/>
</dbReference>
<dbReference type="SMR" id="P11599"/>
<dbReference type="GO" id="GO:0005886">
    <property type="term" value="C:plasma membrane"/>
    <property type="evidence" value="ECO:0007669"/>
    <property type="project" value="UniProtKB-SubCell"/>
</dbReference>
<dbReference type="GO" id="GO:0030256">
    <property type="term" value="C:type I protein secretion system complex"/>
    <property type="evidence" value="ECO:0007669"/>
    <property type="project" value="InterPro"/>
</dbReference>
<dbReference type="GO" id="GO:0015421">
    <property type="term" value="F:ABC-type oligopeptide transporter activity"/>
    <property type="evidence" value="ECO:0007669"/>
    <property type="project" value="TreeGrafter"/>
</dbReference>
<dbReference type="GO" id="GO:0005524">
    <property type="term" value="F:ATP binding"/>
    <property type="evidence" value="ECO:0007669"/>
    <property type="project" value="UniProtKB-KW"/>
</dbReference>
<dbReference type="GO" id="GO:0016887">
    <property type="term" value="F:ATP hydrolysis activity"/>
    <property type="evidence" value="ECO:0007669"/>
    <property type="project" value="InterPro"/>
</dbReference>
<dbReference type="GO" id="GO:0008233">
    <property type="term" value="F:peptidase activity"/>
    <property type="evidence" value="ECO:0007669"/>
    <property type="project" value="InterPro"/>
</dbReference>
<dbReference type="GO" id="GO:0031640">
    <property type="term" value="P:killing of cells of another organism"/>
    <property type="evidence" value="ECO:0007669"/>
    <property type="project" value="UniProtKB-KW"/>
</dbReference>
<dbReference type="GO" id="GO:0030253">
    <property type="term" value="P:protein secretion by the type I secretion system"/>
    <property type="evidence" value="ECO:0007669"/>
    <property type="project" value="InterPro"/>
</dbReference>
<dbReference type="GO" id="GO:0006508">
    <property type="term" value="P:proteolysis"/>
    <property type="evidence" value="ECO:0007669"/>
    <property type="project" value="InterPro"/>
</dbReference>
<dbReference type="CDD" id="cd18588">
    <property type="entry name" value="ABC_6TM_CyaB_HlyB_like"/>
    <property type="match status" value="1"/>
</dbReference>
<dbReference type="CDD" id="cd03252">
    <property type="entry name" value="ABCC_Hemolysin"/>
    <property type="match status" value="1"/>
</dbReference>
<dbReference type="CDD" id="cd02417">
    <property type="entry name" value="Peptidase_C39_likeA"/>
    <property type="match status" value="1"/>
</dbReference>
<dbReference type="FunFam" id="3.40.50.300:FF:000299">
    <property type="entry name" value="ABC transporter ATP-binding protein/permease"/>
    <property type="match status" value="1"/>
</dbReference>
<dbReference type="FunFam" id="1.20.1560.10:FF:000056">
    <property type="entry name" value="Alpha-hemolysin translocation ATP-binding protein HlyB"/>
    <property type="match status" value="1"/>
</dbReference>
<dbReference type="FunFam" id="3.90.70.10:FF:000148">
    <property type="entry name" value="Alpha-hemolysin translocation ATP-binding protein HlyB"/>
    <property type="match status" value="1"/>
</dbReference>
<dbReference type="Gene3D" id="1.20.1560.10">
    <property type="entry name" value="ABC transporter type 1, transmembrane domain"/>
    <property type="match status" value="1"/>
</dbReference>
<dbReference type="Gene3D" id="3.90.70.10">
    <property type="entry name" value="Cysteine proteinases"/>
    <property type="match status" value="1"/>
</dbReference>
<dbReference type="Gene3D" id="3.40.50.300">
    <property type="entry name" value="P-loop containing nucleotide triphosphate hydrolases"/>
    <property type="match status" value="1"/>
</dbReference>
<dbReference type="InterPro" id="IPR003593">
    <property type="entry name" value="AAA+_ATPase"/>
</dbReference>
<dbReference type="InterPro" id="IPR011527">
    <property type="entry name" value="ABC1_TM_dom"/>
</dbReference>
<dbReference type="InterPro" id="IPR036640">
    <property type="entry name" value="ABC1_TM_sf"/>
</dbReference>
<dbReference type="InterPro" id="IPR003439">
    <property type="entry name" value="ABC_transporter-like_ATP-bd"/>
</dbReference>
<dbReference type="InterPro" id="IPR017871">
    <property type="entry name" value="ABC_transporter-like_CS"/>
</dbReference>
<dbReference type="InterPro" id="IPR010132">
    <property type="entry name" value="ATPase_T1SS_HlyB"/>
</dbReference>
<dbReference type="InterPro" id="IPR027417">
    <property type="entry name" value="P-loop_NTPase"/>
</dbReference>
<dbReference type="InterPro" id="IPR005074">
    <property type="entry name" value="Peptidase_C39"/>
</dbReference>
<dbReference type="InterPro" id="IPR039395">
    <property type="entry name" value="Peptidase_C39-like_A"/>
</dbReference>
<dbReference type="InterPro" id="IPR039421">
    <property type="entry name" value="Type_1_exporter"/>
</dbReference>
<dbReference type="NCBIfam" id="TIGR01846">
    <property type="entry name" value="type_I_sec_HlyB"/>
    <property type="match status" value="1"/>
</dbReference>
<dbReference type="PANTHER" id="PTHR43394:SF1">
    <property type="entry name" value="ATP-BINDING CASSETTE SUB-FAMILY B MEMBER 10, MITOCHONDRIAL"/>
    <property type="match status" value="1"/>
</dbReference>
<dbReference type="PANTHER" id="PTHR43394">
    <property type="entry name" value="ATP-DEPENDENT PERMEASE MDL1, MITOCHONDRIAL"/>
    <property type="match status" value="1"/>
</dbReference>
<dbReference type="Pfam" id="PF00664">
    <property type="entry name" value="ABC_membrane"/>
    <property type="match status" value="1"/>
</dbReference>
<dbReference type="Pfam" id="PF00005">
    <property type="entry name" value="ABC_tran"/>
    <property type="match status" value="1"/>
</dbReference>
<dbReference type="Pfam" id="PF03412">
    <property type="entry name" value="Peptidase_C39"/>
    <property type="match status" value="1"/>
</dbReference>
<dbReference type="SMART" id="SM00382">
    <property type="entry name" value="AAA"/>
    <property type="match status" value="1"/>
</dbReference>
<dbReference type="SUPFAM" id="SSF90123">
    <property type="entry name" value="ABC transporter transmembrane region"/>
    <property type="match status" value="1"/>
</dbReference>
<dbReference type="SUPFAM" id="SSF52540">
    <property type="entry name" value="P-loop containing nucleoside triphosphate hydrolases"/>
    <property type="match status" value="1"/>
</dbReference>
<dbReference type="PROSITE" id="PS50929">
    <property type="entry name" value="ABC_TM1F"/>
    <property type="match status" value="1"/>
</dbReference>
<dbReference type="PROSITE" id="PS00211">
    <property type="entry name" value="ABC_TRANSPORTER_1"/>
    <property type="match status" value="1"/>
</dbReference>
<dbReference type="PROSITE" id="PS50893">
    <property type="entry name" value="ABC_TRANSPORTER_2"/>
    <property type="match status" value="1"/>
</dbReference>
<dbReference type="PROSITE" id="PS50990">
    <property type="entry name" value="PEPTIDASE_C39"/>
    <property type="match status" value="1"/>
</dbReference>
<organism>
    <name type="scientific">Proteus vulgaris</name>
    <dbReference type="NCBI Taxonomy" id="585"/>
    <lineage>
        <taxon>Bacteria</taxon>
        <taxon>Pseudomonadati</taxon>
        <taxon>Pseudomonadota</taxon>
        <taxon>Gammaproteobacteria</taxon>
        <taxon>Enterobacterales</taxon>
        <taxon>Morganellaceae</taxon>
        <taxon>Proteus</taxon>
    </lineage>
</organism>
<name>HLYB_PROVU</name>
<protein>
    <recommendedName>
        <fullName>Alpha-hemolysin translocation ATP-binding protein HlyB</fullName>
    </recommendedName>
</protein>
<sequence>MDFHHKNNYGLYALEILAQYHNISINPEEIKHKFDINGVGLDLTSWLLAAKSLELKVKAVKKTIERLNFIYLPALVWREDGHHFILTKVNKESNRYLIYDLEQRNPRVLEQAEFEDLYQGNIILITSRSSVIGKLAKFDFTWFIPAVIKYRKIFIETLIVSVFLQLFALITPLFFQVVMDKVLVHRGFSTLNIITIALAVVAIFEITLSGLRTYIFTHSTSRIDVELGAKLFRHLLALPISYFESRRVGDTVARVRELDQIRNFLTGQALTSILDLLFSFIFFAVMWYYSPKLTLVILFSLPCYATWSIFISPILRRRLDDKFARNADNQSFLVESVTAINTIKAMAVSPQMTNIWDKQLAGYVAAGFKVTVLATIGQQGIQLIQKAVMIINLWLGAHLVISGDLSIGQLIAFNMLAGQIVAPVIRLAQLWQDFQQVGISVTRLGDVLNYPTESYQGKLTLPEINGDISFRNIRFRYKPDAPIILNNINLNIKQGEIIGIVGRSGSGKSTLTKLIQRFYIPENGQVLIDGHDLALADPNWLRRQVGVVLQDNVLLNRSIIDNIALADPGMPVEKVIHAAKLAGAHDFISELREGYNTIVGEQGAGLSGGQRQRIAIARALVNNPKILIFDEATSALDYESEHVIMRNMHKICQGRTVIIIAHRLSTVKNADRIIVMEKGQIIEQGKHKELLSDPESLYHYLHQLQSD</sequence>
<proteinExistence type="inferred from homology"/>
<accession>P11599</accession>
<keyword id="KW-0067">ATP-binding</keyword>
<keyword id="KW-1003">Cell membrane</keyword>
<keyword id="KW-0204">Cytolysis</keyword>
<keyword id="KW-0354">Hemolysis</keyword>
<keyword id="KW-0378">Hydrolase</keyword>
<keyword id="KW-0472">Membrane</keyword>
<keyword id="KW-0547">Nucleotide-binding</keyword>
<keyword id="KW-0812">Transmembrane</keyword>
<keyword id="KW-1133">Transmembrane helix</keyword>
<keyword id="KW-0813">Transport</keyword>
<reference key="1">
    <citation type="journal article" date="1988" name="Mol. Gen. Genet.">
        <title>Comparison of the haemolysin secretion protein HlyB from Proteus vulgaris and Escherichia coli; site-directed mutagenesis causing impairment of export function.</title>
        <authorList>
            <person name="Koronakis V."/>
            <person name="Koronakis E."/>
            <person name="Hughes C."/>
        </authorList>
    </citation>
    <scope>NUCLEOTIDE SEQUENCE [GENOMIC DNA]</scope>
</reference>
<comment type="function">
    <text>Involved in the export of hemolysin A.</text>
</comment>
<comment type="subcellular location">
    <subcellularLocation>
        <location>Cell membrane</location>
        <topology>Multi-pass membrane protein</topology>
    </subcellularLocation>
</comment>
<comment type="similarity">
    <text evidence="4">Belongs to the ABC transporter superfamily. Protein-1 exporter (TC 3.A.1.109) family.</text>
</comment>
<comment type="caution">
    <text evidence="4">Tyr-9 is present instead of the conserved Cys which is expected to be the active site residue of peptidase C39. Thus they are presumed to be without peptidase activity.</text>
</comment>